<protein>
    <recommendedName>
        <fullName evidence="36">Phragmoplastin DRP1A</fullName>
        <ecNumber evidence="14">3.6.5.-</ecNumber>
    </recommendedName>
    <alternativeName>
        <fullName evidence="33">Dynamin-like protein 1</fullName>
    </alternativeName>
    <alternativeName>
        <fullName evidence="23 24 25 30">Dynamin-like protein 1A</fullName>
    </alternativeName>
    <alternativeName>
        <fullName evidence="26 27 28 31">Dynamin-related protein 1A</fullName>
        <shortName evidence="26 27 28 31">AtDRP1A</shortName>
    </alternativeName>
    <alternativeName>
        <fullName evidence="29">Protein RADIAL SWELLING 9</fullName>
    </alternativeName>
</protein>
<name>DRP1A_ARATH</name>
<gene>
    <name evidence="26 27 28 31" type="primary">DRP1A</name>
    <name evidence="33" type="synonym">ADL1</name>
    <name evidence="23 24 25 30" type="synonym">ADL1A</name>
    <name evidence="32" type="synonym">AG68</name>
    <name evidence="29" type="synonym">RSW9</name>
    <name evidence="37" type="ordered locus">At5g42080</name>
    <name evidence="38" type="ORF">MJC20.19</name>
</gene>
<proteinExistence type="evidence at protein level"/>
<keyword id="KW-0002">3D-structure</keyword>
<keyword id="KW-0007">Acetylation</keyword>
<keyword id="KW-0025">Alternative splicing</keyword>
<keyword id="KW-0131">Cell cycle</keyword>
<keyword id="KW-0132">Cell division</keyword>
<keyword id="KW-1003">Cell membrane</keyword>
<keyword id="KW-0963">Cytoplasm</keyword>
<keyword id="KW-0968">Cytoplasmic vesicle</keyword>
<keyword id="KW-0206">Cytoskeleton</keyword>
<keyword id="KW-0342">GTP-binding</keyword>
<keyword id="KW-0378">Hydrolase</keyword>
<keyword id="KW-0472">Membrane</keyword>
<keyword id="KW-0493">Microtubule</keyword>
<keyword id="KW-0505">Motor protein</keyword>
<keyword id="KW-0547">Nucleotide-binding</keyword>
<keyword id="KW-0653">Protein transport</keyword>
<keyword id="KW-1185">Reference proteome</keyword>
<keyword id="KW-0813">Transport</keyword>
<evidence type="ECO:0000255" key="1">
    <source>
        <dbReference type="PROSITE-ProRule" id="PRU00720"/>
    </source>
</evidence>
<evidence type="ECO:0000255" key="2">
    <source>
        <dbReference type="PROSITE-ProRule" id="PRU01055"/>
    </source>
</evidence>
<evidence type="ECO:0000269" key="3">
    <source>
    </source>
</evidence>
<evidence type="ECO:0000269" key="4">
    <source>
    </source>
</evidence>
<evidence type="ECO:0000269" key="5">
    <source>
    </source>
</evidence>
<evidence type="ECO:0000269" key="6">
    <source>
    </source>
</evidence>
<evidence type="ECO:0000269" key="7">
    <source>
    </source>
</evidence>
<evidence type="ECO:0000269" key="8">
    <source>
    </source>
</evidence>
<evidence type="ECO:0000269" key="9">
    <source>
    </source>
</evidence>
<evidence type="ECO:0000269" key="10">
    <source>
    </source>
</evidence>
<evidence type="ECO:0000269" key="11">
    <source>
    </source>
</evidence>
<evidence type="ECO:0000269" key="12">
    <source>
    </source>
</evidence>
<evidence type="ECO:0000269" key="13">
    <source>
    </source>
</evidence>
<evidence type="ECO:0000269" key="14">
    <source>
    </source>
</evidence>
<evidence type="ECO:0000269" key="15">
    <source>
    </source>
</evidence>
<evidence type="ECO:0000269" key="16">
    <source>
    </source>
</evidence>
<evidence type="ECO:0000269" key="17">
    <source>
    </source>
</evidence>
<evidence type="ECO:0000269" key="18">
    <source>
    </source>
</evidence>
<evidence type="ECO:0000269" key="19">
    <source>
    </source>
</evidence>
<evidence type="ECO:0000269" key="20">
    <source>
    </source>
</evidence>
<evidence type="ECO:0000269" key="21">
    <source>
    </source>
</evidence>
<evidence type="ECO:0000269" key="22">
    <source>
    </source>
</evidence>
<evidence type="ECO:0000303" key="23">
    <source>
    </source>
</evidence>
<evidence type="ECO:0000303" key="24">
    <source>
    </source>
</evidence>
<evidence type="ECO:0000303" key="25">
    <source>
    </source>
</evidence>
<evidence type="ECO:0000303" key="26">
    <source>
    </source>
</evidence>
<evidence type="ECO:0000303" key="27">
    <source>
    </source>
</evidence>
<evidence type="ECO:0000303" key="28">
    <source>
    </source>
</evidence>
<evidence type="ECO:0000303" key="29">
    <source>
    </source>
</evidence>
<evidence type="ECO:0000303" key="30">
    <source>
    </source>
</evidence>
<evidence type="ECO:0000303" key="31">
    <source>
    </source>
</evidence>
<evidence type="ECO:0000303" key="32">
    <source>
    </source>
</evidence>
<evidence type="ECO:0000303" key="33">
    <source>
    </source>
</evidence>
<evidence type="ECO:0000303" key="34">
    <source ref="6"/>
</evidence>
<evidence type="ECO:0000303" key="35">
    <source ref="7"/>
</evidence>
<evidence type="ECO:0000305" key="36"/>
<evidence type="ECO:0000312" key="37">
    <source>
        <dbReference type="Araport" id="AT5G42080"/>
    </source>
</evidence>
<evidence type="ECO:0000312" key="38">
    <source>
        <dbReference type="EMBL" id="BAB08441.1"/>
    </source>
</evidence>
<evidence type="ECO:0007744" key="39">
    <source>
        <dbReference type="PDB" id="3T34"/>
    </source>
</evidence>
<evidence type="ECO:0007744" key="40">
    <source>
        <dbReference type="PDB" id="3T35"/>
    </source>
</evidence>
<evidence type="ECO:0007744" key="41">
    <source>
    </source>
</evidence>
<evidence type="ECO:0007829" key="42">
    <source>
        <dbReference type="PDB" id="3T34"/>
    </source>
</evidence>
<feature type="chain" id="PRO_0000206577" description="Phragmoplastin DRP1A">
    <location>
        <begin position="1"/>
        <end position="610"/>
    </location>
</feature>
<feature type="domain" description="Dynamin-type G" evidence="2">
    <location>
        <begin position="31"/>
        <end position="300"/>
    </location>
</feature>
<feature type="domain" description="GED" evidence="1">
    <location>
        <begin position="518"/>
        <end position="610"/>
    </location>
</feature>
<feature type="region of interest" description="G1 motif" evidence="2">
    <location>
        <begin position="41"/>
        <end position="48"/>
    </location>
</feature>
<feature type="region of interest" description="G2 motif" evidence="2">
    <location>
        <begin position="67"/>
        <end position="69"/>
    </location>
</feature>
<feature type="region of interest" description="G3 motif" evidence="2">
    <location>
        <begin position="142"/>
        <end position="145"/>
    </location>
</feature>
<feature type="region of interest" description="G4 motif" evidence="2">
    <location>
        <begin position="211"/>
        <end position="214"/>
    </location>
</feature>
<feature type="region of interest" description="G5 motif" evidence="2">
    <location>
        <begin position="241"/>
        <end position="244"/>
    </location>
</feature>
<feature type="binding site" evidence="16 39 40">
    <location>
        <begin position="44"/>
        <end position="49"/>
    </location>
    <ligand>
        <name>GTP</name>
        <dbReference type="ChEBI" id="CHEBI:37565"/>
    </ligand>
</feature>
<feature type="binding site" evidence="16 39 40">
    <location>
        <begin position="212"/>
        <end position="217"/>
    </location>
    <ligand>
        <name>GTP</name>
        <dbReference type="ChEBI" id="CHEBI:37565"/>
    </ligand>
</feature>
<feature type="binding site" evidence="16 39 40">
    <location>
        <begin position="242"/>
        <end position="245"/>
    </location>
    <ligand>
        <name>GTP</name>
        <dbReference type="ChEBI" id="CHEBI:37565"/>
    </ligand>
</feature>
<feature type="modified residue" description="N-acetylmethionine" evidence="41">
    <location>
        <position position="1"/>
    </location>
</feature>
<feature type="splice variant" id="VSP_009187" description="In isoform 2." evidence="34 35">
    <location>
        <begin position="430"/>
        <end position="610"/>
    </location>
</feature>
<feature type="mutagenesis site" description="Dominant-negative mutation leading to a prolonged residence time of clathrin at the plasma membrane and impaired endocytosis of membrane lipids. Disturbed BOR1 polar localization in low-boron (B) conditions and blocked BOR1 endocytosis and subsequent degradation under high-concentration of boron." evidence="19">
    <original>K</original>
    <variation>A</variation>
    <location>
        <position position="47"/>
    </location>
</feature>
<feature type="sequence conflict" description="In Ref. 5; AAM19784/AAN46817." evidence="36" ref="5">
    <original>V</original>
    <variation>A</variation>
    <location>
        <position position="50"/>
    </location>
</feature>
<feature type="sequence conflict" description="In Ref. 2; AAB63528." evidence="36" ref="2">
    <original>R</original>
    <variation>Q</variation>
    <location>
        <position position="167"/>
    </location>
</feature>
<feature type="sequence conflict" description="In Ref. 7; AAM65743." evidence="36" ref="7">
    <original>Q</original>
    <variation>H</variation>
    <location>
        <position position="367"/>
    </location>
</feature>
<feature type="sequence conflict" description="In Ref. 2; AAB63528." evidence="36" ref="2">
    <original>EA</original>
    <variation>KT</variation>
    <location>
        <begin position="423"/>
        <end position="424"/>
    </location>
</feature>
<feature type="helix" evidence="42">
    <location>
        <begin position="4"/>
        <end position="10"/>
    </location>
</feature>
<feature type="turn" evidence="42">
    <location>
        <begin position="11"/>
        <end position="16"/>
    </location>
</feature>
<feature type="strand" evidence="42">
    <location>
        <begin position="36"/>
        <end position="40"/>
    </location>
</feature>
<feature type="helix" evidence="42">
    <location>
        <begin position="47"/>
        <end position="55"/>
    </location>
</feature>
<feature type="strand" evidence="42">
    <location>
        <begin position="64"/>
        <end position="66"/>
    </location>
</feature>
<feature type="strand" evidence="42">
    <location>
        <begin position="72"/>
        <end position="78"/>
    </location>
</feature>
<feature type="strand" evidence="42">
    <location>
        <begin position="86"/>
        <end position="89"/>
    </location>
</feature>
<feature type="helix" evidence="42">
    <location>
        <begin position="100"/>
        <end position="113"/>
    </location>
</feature>
<feature type="strand" evidence="42">
    <location>
        <begin position="126"/>
        <end position="132"/>
    </location>
</feature>
<feature type="strand" evidence="42">
    <location>
        <begin position="137"/>
        <end position="142"/>
    </location>
</feature>
<feature type="helix" evidence="42">
    <location>
        <begin position="158"/>
        <end position="171"/>
    </location>
</feature>
<feature type="strand" evidence="42">
    <location>
        <begin position="172"/>
        <end position="182"/>
    </location>
</feature>
<feature type="helix" evidence="42">
    <location>
        <begin position="187"/>
        <end position="189"/>
    </location>
</feature>
<feature type="helix" evidence="42">
    <location>
        <begin position="191"/>
        <end position="198"/>
    </location>
</feature>
<feature type="strand" evidence="42">
    <location>
        <begin position="206"/>
        <end position="211"/>
    </location>
</feature>
<feature type="helix" evidence="42">
    <location>
        <begin position="213"/>
        <end position="215"/>
    </location>
</feature>
<feature type="helix" evidence="42">
    <location>
        <begin position="223"/>
        <end position="226"/>
    </location>
</feature>
<feature type="strand" evidence="42">
    <location>
        <begin position="229"/>
        <end position="231"/>
    </location>
</feature>
<feature type="helix" evidence="42">
    <location>
        <begin position="245"/>
        <end position="249"/>
    </location>
</feature>
<feature type="helix" evidence="42">
    <location>
        <begin position="254"/>
        <end position="265"/>
    </location>
</feature>
<feature type="turn" evidence="42">
    <location>
        <begin position="269"/>
        <end position="271"/>
    </location>
</feature>
<feature type="helix" evidence="42">
    <location>
        <begin position="272"/>
        <end position="277"/>
    </location>
</feature>
<feature type="helix" evidence="42">
    <location>
        <begin position="280"/>
        <end position="296"/>
    </location>
</feature>
<feature type="helix" evidence="42">
    <location>
        <begin position="302"/>
        <end position="310"/>
    </location>
</feature>
<feature type="turn" evidence="42">
    <location>
        <begin position="311"/>
        <end position="314"/>
    </location>
</feature>
<feature type="helix" evidence="42">
    <location>
        <begin position="588"/>
        <end position="598"/>
    </location>
</feature>
<sequence length="610" mass="68172">MENLISLVNKIQRACTALGDHGDSSALPTLWDSLPAIAVVGGQSSGKSSVLESIVGKDFLPRGSGIVTRRPLVLQLQKIDDGTREYAEFLHLPRKKFTDFAAVRKEIQDETDRETGRSKAISSVPIHLSIYSPNVVNLTLIDLPGLTKVAVDGQSDSIVKDIENMVRSYIEKPNCIILAISPANQDLATSDAIKISREVDPSGDRTFGVLTKIDLMDKGTDAVEILEGRSFKLKYPWVGVVNRSQADINKNVDMIAARKREREYFSNTTEYRHLANKMGSEHLAKMLSKHLERVIKSRIPGIQSLINKTVLELETELSRLGKPIAADAGGKLYSIMEICRLFDQIFKEHLDGVRAGGEKVYNVFDNQLPAALKRLQFDKQLAMDNIRKLVTEADGYQPHLIAPEQGYRRLIESSIVSIRGPAEASVDTVHAILKDLVHKSVNETVELKQYPALRVEVTNAAIESLDKMREGSKKATLQLVDMECSYLTVDFFRKLPQDVEKGGNPTHSIFDRYNDSYLRRIGSNVLSYVNMVCAGLRNSIPKSIVYCQVREAKRSLLDHFFAELGTMDMKRLSSLLNEDPAIMERRSAISKRLELYRAAQSEIDAVAWSK</sequence>
<organism>
    <name type="scientific">Arabidopsis thaliana</name>
    <name type="common">Mouse-ear cress</name>
    <dbReference type="NCBI Taxonomy" id="3702"/>
    <lineage>
        <taxon>Eukaryota</taxon>
        <taxon>Viridiplantae</taxon>
        <taxon>Streptophyta</taxon>
        <taxon>Embryophyta</taxon>
        <taxon>Tracheophyta</taxon>
        <taxon>Spermatophyta</taxon>
        <taxon>Magnoliopsida</taxon>
        <taxon>eudicotyledons</taxon>
        <taxon>Gunneridae</taxon>
        <taxon>Pentapetalae</taxon>
        <taxon>rosids</taxon>
        <taxon>malvids</taxon>
        <taxon>Brassicales</taxon>
        <taxon>Brassicaceae</taxon>
        <taxon>Camelineae</taxon>
        <taxon>Arabidopsis</taxon>
    </lineage>
</organism>
<accession>P42697</accession>
<accession>Q0WLG2</accession>
<accession>Q1EBU0</accession>
<accession>Q39118</accession>
<accession>Q8L9V5</accession>
<accession>Q8LPS7</accession>
<dbReference type="EC" id="3.6.5.-" evidence="14"/>
<dbReference type="EMBL" id="L38614">
    <property type="protein sequence ID" value="AAA84446.1"/>
    <property type="molecule type" value="mRNA"/>
</dbReference>
<dbReference type="EMBL" id="L36939">
    <property type="protein sequence ID" value="AAB63528.1"/>
    <property type="status" value="ALT_FRAME"/>
    <property type="molecule type" value="mRNA"/>
</dbReference>
<dbReference type="EMBL" id="AB017067">
    <property type="protein sequence ID" value="BAB08441.1"/>
    <property type="molecule type" value="Genomic_DNA"/>
</dbReference>
<dbReference type="EMBL" id="CP002688">
    <property type="protein sequence ID" value="AED94763.1"/>
    <property type="molecule type" value="Genomic_DNA"/>
</dbReference>
<dbReference type="EMBL" id="CP002688">
    <property type="protein sequence ID" value="AED94764.1"/>
    <property type="molecule type" value="Genomic_DNA"/>
</dbReference>
<dbReference type="EMBL" id="CP002688">
    <property type="protein sequence ID" value="ANM69643.1"/>
    <property type="molecule type" value="Genomic_DNA"/>
</dbReference>
<dbReference type="EMBL" id="AY094408">
    <property type="protein sequence ID" value="AAM19784.1"/>
    <property type="molecule type" value="mRNA"/>
</dbReference>
<dbReference type="EMBL" id="BT001063">
    <property type="protein sequence ID" value="AAN46817.1"/>
    <property type="molecule type" value="mRNA"/>
</dbReference>
<dbReference type="EMBL" id="BT025994">
    <property type="protein sequence ID" value="ABG25083.1"/>
    <property type="molecule type" value="mRNA"/>
</dbReference>
<dbReference type="EMBL" id="AY088201">
    <property type="protein sequence ID" value="AAM65743.1"/>
    <property type="molecule type" value="mRNA"/>
</dbReference>
<dbReference type="EMBL" id="AK230240">
    <property type="protein sequence ID" value="BAF02045.1"/>
    <property type="molecule type" value="mRNA"/>
</dbReference>
<dbReference type="PIR" id="S59558">
    <property type="entry name" value="S59558"/>
</dbReference>
<dbReference type="RefSeq" id="NP_001331306.1">
    <molecule id="P42697-1"/>
    <property type="nucleotide sequence ID" value="NM_001344434.1"/>
</dbReference>
<dbReference type="RefSeq" id="NP_568602.3">
    <molecule id="P42697-2"/>
    <property type="nucleotide sequence ID" value="NM_123573.3"/>
</dbReference>
<dbReference type="RefSeq" id="NP_851120.1">
    <molecule id="P42697-1"/>
    <property type="nucleotide sequence ID" value="NM_180789.3"/>
</dbReference>
<dbReference type="PDB" id="3T34">
    <property type="method" value="X-ray"/>
    <property type="resolution" value="2.40 A"/>
    <property type="chains" value="A/B=1-325, A/B=579-606"/>
</dbReference>
<dbReference type="PDB" id="3T35">
    <property type="method" value="X-ray"/>
    <property type="resolution" value="3.59 A"/>
    <property type="chains" value="A/B/C/D=1-325, A/B/C/D=579-606"/>
</dbReference>
<dbReference type="PDBsum" id="3T34"/>
<dbReference type="PDBsum" id="3T35"/>
<dbReference type="SMR" id="P42697"/>
<dbReference type="BioGRID" id="19463">
    <property type="interactions" value="15"/>
</dbReference>
<dbReference type="DIP" id="DIP-37642N"/>
<dbReference type="FunCoup" id="P42697">
    <property type="interactions" value="1893"/>
</dbReference>
<dbReference type="IntAct" id="P42697">
    <property type="interactions" value="8"/>
</dbReference>
<dbReference type="MINT" id="P42697"/>
<dbReference type="STRING" id="3702.P42697"/>
<dbReference type="iPTMnet" id="P42697"/>
<dbReference type="PaxDb" id="3702-AT5G42080.1"/>
<dbReference type="ProteomicsDB" id="224359">
    <molecule id="P42697-1"/>
</dbReference>
<dbReference type="EnsemblPlants" id="AT5G42080.1">
    <molecule id="P42697-1"/>
    <property type="protein sequence ID" value="AT5G42080.1"/>
    <property type="gene ID" value="AT5G42080"/>
</dbReference>
<dbReference type="EnsemblPlants" id="AT5G42080.2">
    <molecule id="P42697-2"/>
    <property type="protein sequence ID" value="AT5G42080.2"/>
    <property type="gene ID" value="AT5G42080"/>
</dbReference>
<dbReference type="EnsemblPlants" id="AT5G42080.4">
    <molecule id="P42697-1"/>
    <property type="protein sequence ID" value="AT5G42080.4"/>
    <property type="gene ID" value="AT5G42080"/>
</dbReference>
<dbReference type="GeneID" id="834213"/>
<dbReference type="Gramene" id="AT5G42080.1">
    <molecule id="P42697-1"/>
    <property type="protein sequence ID" value="AT5G42080.1"/>
    <property type="gene ID" value="AT5G42080"/>
</dbReference>
<dbReference type="Gramene" id="AT5G42080.2">
    <molecule id="P42697-2"/>
    <property type="protein sequence ID" value="AT5G42080.2"/>
    <property type="gene ID" value="AT5G42080"/>
</dbReference>
<dbReference type="Gramene" id="AT5G42080.4">
    <molecule id="P42697-1"/>
    <property type="protein sequence ID" value="AT5G42080.4"/>
    <property type="gene ID" value="AT5G42080"/>
</dbReference>
<dbReference type="KEGG" id="ath:AT5G42080"/>
<dbReference type="Araport" id="AT5G42080"/>
<dbReference type="TAIR" id="AT5G42080">
    <property type="gene designation" value="DL1"/>
</dbReference>
<dbReference type="eggNOG" id="KOG0446">
    <property type="taxonomic scope" value="Eukaryota"/>
</dbReference>
<dbReference type="InParanoid" id="P42697"/>
<dbReference type="OMA" id="VDAIHYV"/>
<dbReference type="OrthoDB" id="5061070at2759"/>
<dbReference type="PhylomeDB" id="P42697"/>
<dbReference type="BioCyc" id="ARA:AT5G42080-MONOMER"/>
<dbReference type="BRENDA" id="3.6.5.5">
    <property type="organism ID" value="399"/>
</dbReference>
<dbReference type="CD-CODE" id="4299E36E">
    <property type="entry name" value="Nucleolus"/>
</dbReference>
<dbReference type="EvolutionaryTrace" id="P42697"/>
<dbReference type="PRO" id="PR:P42697"/>
<dbReference type="Proteomes" id="UP000006548">
    <property type="component" value="Chromosome 5"/>
</dbReference>
<dbReference type="ExpressionAtlas" id="P42697">
    <property type="expression patterns" value="baseline and differential"/>
</dbReference>
<dbReference type="GO" id="GO:0005938">
    <property type="term" value="C:cell cortex"/>
    <property type="evidence" value="ECO:0000314"/>
    <property type="project" value="UniProtKB"/>
</dbReference>
<dbReference type="GO" id="GO:0009504">
    <property type="term" value="C:cell plate"/>
    <property type="evidence" value="ECO:0000314"/>
    <property type="project" value="UniProtKB"/>
</dbReference>
<dbReference type="GO" id="GO:0009535">
    <property type="term" value="C:chloroplast thylakoid membrane"/>
    <property type="evidence" value="ECO:0000314"/>
    <property type="project" value="TAIR"/>
</dbReference>
<dbReference type="GO" id="GO:0045334">
    <property type="term" value="C:clathrin-coated endocytic vesicle"/>
    <property type="evidence" value="ECO:0000314"/>
    <property type="project" value="UniProtKB"/>
</dbReference>
<dbReference type="GO" id="GO:0030136">
    <property type="term" value="C:clathrin-coated vesicle"/>
    <property type="evidence" value="ECO:0000314"/>
    <property type="project" value="UniProtKB"/>
</dbReference>
<dbReference type="GO" id="GO:0005737">
    <property type="term" value="C:cytoplasm"/>
    <property type="evidence" value="ECO:0000314"/>
    <property type="project" value="UniProtKB"/>
</dbReference>
<dbReference type="GO" id="GO:0005856">
    <property type="term" value="C:cytoskeleton"/>
    <property type="evidence" value="ECO:0000314"/>
    <property type="project" value="UniProtKB"/>
</dbReference>
<dbReference type="GO" id="GO:0005874">
    <property type="term" value="C:microtubule"/>
    <property type="evidence" value="ECO:0000314"/>
    <property type="project" value="TAIR"/>
</dbReference>
<dbReference type="GO" id="GO:0009524">
    <property type="term" value="C:phragmoplast"/>
    <property type="evidence" value="ECO:0000314"/>
    <property type="project" value="UniProtKB"/>
</dbReference>
<dbReference type="GO" id="GO:0000325">
    <property type="term" value="C:plant-type vacuole"/>
    <property type="evidence" value="ECO:0007005"/>
    <property type="project" value="TAIR"/>
</dbReference>
<dbReference type="GO" id="GO:0005886">
    <property type="term" value="C:plasma membrane"/>
    <property type="evidence" value="ECO:0000314"/>
    <property type="project" value="UniProtKB"/>
</dbReference>
<dbReference type="GO" id="GO:0009506">
    <property type="term" value="C:plasmodesma"/>
    <property type="evidence" value="ECO:0007005"/>
    <property type="project" value="TAIR"/>
</dbReference>
<dbReference type="GO" id="GO:0009536">
    <property type="term" value="C:plastid"/>
    <property type="evidence" value="ECO:0007005"/>
    <property type="project" value="TAIR"/>
</dbReference>
<dbReference type="GO" id="GO:0030276">
    <property type="term" value="F:clathrin binding"/>
    <property type="evidence" value="ECO:0000314"/>
    <property type="project" value="TAIR"/>
</dbReference>
<dbReference type="GO" id="GO:0005525">
    <property type="term" value="F:GTP binding"/>
    <property type="evidence" value="ECO:0007669"/>
    <property type="project" value="UniProtKB-KW"/>
</dbReference>
<dbReference type="GO" id="GO:0003924">
    <property type="term" value="F:GTPase activity"/>
    <property type="evidence" value="ECO:0000314"/>
    <property type="project" value="TAIR"/>
</dbReference>
<dbReference type="GO" id="GO:0043424">
    <property type="term" value="F:protein histidine kinase binding"/>
    <property type="evidence" value="ECO:0000353"/>
    <property type="project" value="UniProtKB"/>
</dbReference>
<dbReference type="GO" id="GO:0009920">
    <property type="term" value="P:cell plate formation involved in plant-type cell wall biogenesis"/>
    <property type="evidence" value="ECO:0000314"/>
    <property type="project" value="UniProtKB"/>
</dbReference>
<dbReference type="GO" id="GO:0080029">
    <property type="term" value="P:cellular response to boron-containing substance levels"/>
    <property type="evidence" value="ECO:0000315"/>
    <property type="project" value="UniProtKB"/>
</dbReference>
<dbReference type="GO" id="GO:0072583">
    <property type="term" value="P:clathrin-dependent endocytosis"/>
    <property type="evidence" value="ECO:0000314"/>
    <property type="project" value="UniProtKB"/>
</dbReference>
<dbReference type="GO" id="GO:0000911">
    <property type="term" value="P:cytokinesis by cell plate formation"/>
    <property type="evidence" value="ECO:0000316"/>
    <property type="project" value="TAIR"/>
</dbReference>
<dbReference type="GO" id="GO:0009793">
    <property type="term" value="P:embryo development ending in seed dormancy"/>
    <property type="evidence" value="ECO:0000316"/>
    <property type="project" value="TAIR"/>
</dbReference>
<dbReference type="GO" id="GO:0006886">
    <property type="term" value="P:intracellular protein transport"/>
    <property type="evidence" value="ECO:0000315"/>
    <property type="project" value="UniProtKB"/>
</dbReference>
<dbReference type="GO" id="GO:0030100">
    <property type="term" value="P:regulation of endocytosis"/>
    <property type="evidence" value="ECO:0000315"/>
    <property type="project" value="UniProtKB"/>
</dbReference>
<dbReference type="GO" id="GO:2000114">
    <property type="term" value="P:regulation of establishment of cell polarity"/>
    <property type="evidence" value="ECO:0000315"/>
    <property type="project" value="TAIR"/>
</dbReference>
<dbReference type="GO" id="GO:1905952">
    <property type="term" value="P:regulation of lipid localization"/>
    <property type="evidence" value="ECO:0000314"/>
    <property type="project" value="UniProtKB"/>
</dbReference>
<dbReference type="GO" id="GO:2000694">
    <property type="term" value="P:regulation of phragmoplast microtubule organization"/>
    <property type="evidence" value="ECO:0000315"/>
    <property type="project" value="UniProtKB"/>
</dbReference>
<dbReference type="GO" id="GO:0080157">
    <property type="term" value="P:regulation of plant-type cell wall organization or biogenesis"/>
    <property type="evidence" value="ECO:0000315"/>
    <property type="project" value="UniProtKB"/>
</dbReference>
<dbReference type="GO" id="GO:0010036">
    <property type="term" value="P:response to boron-containing substance"/>
    <property type="evidence" value="ECO:0000315"/>
    <property type="project" value="UniProtKB"/>
</dbReference>
<dbReference type="GO" id="GO:0048766">
    <property type="term" value="P:root hair initiation"/>
    <property type="evidence" value="ECO:0000315"/>
    <property type="project" value="TAIR"/>
</dbReference>
<dbReference type="GO" id="GO:0048480">
    <property type="term" value="P:stigma development"/>
    <property type="evidence" value="ECO:0000315"/>
    <property type="project" value="UniProtKB"/>
</dbReference>
<dbReference type="GO" id="GO:0010091">
    <property type="term" value="P:trichome branching"/>
    <property type="evidence" value="ECO:0000315"/>
    <property type="project" value="TAIR"/>
</dbReference>
<dbReference type="GO" id="GO:0010051">
    <property type="term" value="P:xylem and phloem pattern formation"/>
    <property type="evidence" value="ECO:0000315"/>
    <property type="project" value="TAIR"/>
</dbReference>
<dbReference type="CDD" id="cd08771">
    <property type="entry name" value="DLP_1"/>
    <property type="match status" value="1"/>
</dbReference>
<dbReference type="FunFam" id="3.40.50.300:FF:000228">
    <property type="entry name" value="dynamin-related protein 1E"/>
    <property type="match status" value="1"/>
</dbReference>
<dbReference type="FunFam" id="1.20.120.1240:FF:000010">
    <property type="entry name" value="Dynamin-related protein 5A"/>
    <property type="match status" value="1"/>
</dbReference>
<dbReference type="Gene3D" id="1.20.120.1240">
    <property type="entry name" value="Dynamin, middle domain"/>
    <property type="match status" value="1"/>
</dbReference>
<dbReference type="Gene3D" id="3.40.50.300">
    <property type="entry name" value="P-loop containing nucleotide triphosphate hydrolases"/>
    <property type="match status" value="1"/>
</dbReference>
<dbReference type="InterPro" id="IPR022812">
    <property type="entry name" value="Dynamin"/>
</dbReference>
<dbReference type="InterPro" id="IPR001401">
    <property type="entry name" value="Dynamin_GTPase"/>
</dbReference>
<dbReference type="InterPro" id="IPR019762">
    <property type="entry name" value="Dynamin_GTPase_CS"/>
</dbReference>
<dbReference type="InterPro" id="IPR045063">
    <property type="entry name" value="Dynamin_N"/>
</dbReference>
<dbReference type="InterPro" id="IPR000375">
    <property type="entry name" value="Dynamin_stalk"/>
</dbReference>
<dbReference type="InterPro" id="IPR030381">
    <property type="entry name" value="G_DYNAMIN_dom"/>
</dbReference>
<dbReference type="InterPro" id="IPR003130">
    <property type="entry name" value="GED"/>
</dbReference>
<dbReference type="InterPro" id="IPR020850">
    <property type="entry name" value="GED_dom"/>
</dbReference>
<dbReference type="InterPro" id="IPR027417">
    <property type="entry name" value="P-loop_NTPase"/>
</dbReference>
<dbReference type="PANTHER" id="PTHR11566">
    <property type="entry name" value="DYNAMIN"/>
    <property type="match status" value="1"/>
</dbReference>
<dbReference type="PANTHER" id="PTHR11566:SF159">
    <property type="entry name" value="PHRAGMOPLASTIN DRP1A"/>
    <property type="match status" value="1"/>
</dbReference>
<dbReference type="Pfam" id="PF01031">
    <property type="entry name" value="Dynamin_M"/>
    <property type="match status" value="1"/>
</dbReference>
<dbReference type="Pfam" id="PF00350">
    <property type="entry name" value="Dynamin_N"/>
    <property type="match status" value="1"/>
</dbReference>
<dbReference type="Pfam" id="PF02212">
    <property type="entry name" value="GED"/>
    <property type="match status" value="1"/>
</dbReference>
<dbReference type="PRINTS" id="PR00195">
    <property type="entry name" value="DYNAMIN"/>
</dbReference>
<dbReference type="SMART" id="SM00053">
    <property type="entry name" value="DYNc"/>
    <property type="match status" value="1"/>
</dbReference>
<dbReference type="SMART" id="SM00302">
    <property type="entry name" value="GED"/>
    <property type="match status" value="1"/>
</dbReference>
<dbReference type="SUPFAM" id="SSF52540">
    <property type="entry name" value="P-loop containing nucleoside triphosphate hydrolases"/>
    <property type="match status" value="1"/>
</dbReference>
<dbReference type="PROSITE" id="PS00410">
    <property type="entry name" value="G_DYNAMIN_1"/>
    <property type="match status" value="1"/>
</dbReference>
<dbReference type="PROSITE" id="PS51718">
    <property type="entry name" value="G_DYNAMIN_2"/>
    <property type="match status" value="1"/>
</dbReference>
<dbReference type="PROSITE" id="PS51388">
    <property type="entry name" value="GED"/>
    <property type="match status" value="1"/>
</dbReference>
<comment type="function">
    <text evidence="3 4 6 8 9 10 11 14 15 16 17 18 19 20">Microtubule-associated force-producing protein that is targeted to at the leading edges of the forming cell plate during cytokinesis (PubMed:18612642). Also plays a major role in plasma membrane maintenance and cell wall integrity with implications in vesicular trafficking, polar cell expansion, vascular formation, and other aspects of plant growth and development, including stigmatic papillae expansion (PubMed:18256049, PubMed:18344418). Collaboratively with DRP2B, participates in clathrin-coated vesicle formation during endocytosis (PubMed:20231465). Necessary for BOR1 polar localization in low-boron (B) conditions as well as for BOR1 endocytosis and subsequent degradation under high-concentration of boron (PubMed:27449211). Has a GTPase activity (PubMed:20171176). Required for the sterols-dependent dynamic high lipid order observed at the cell plate of dividing cells (PubMed:25234576). Together with SH3P2, converts the fused vesicles to tubular structures at the cell plate and phragmoplasts during cytokinesis (PubMed:18256049, PubMed:28584166). With DRP2B and PIP5K3, required for the precise coordination of polar ARAC3/ROP6 and ARAC4/ROP2 placement and subsequent root hair positioning during planar polarity formation in root hair-forming cells, probably by mediating the correct basal-to-planar polarity switching of D6PK into the polar, lipid-enriched domain (PubMed:27251533). Involved in endocytosis required for cellulose deposition during cell wall formation and elongation (PubMed:18256049). Interacts with plasma membrane-mimetic liposomes and induces their clustering (PubMed:20171176).</text>
</comment>
<comment type="catalytic activity">
    <reaction evidence="14">
        <text>GTP + H2O = GDP + phosphate + H(+)</text>
        <dbReference type="Rhea" id="RHEA:19669"/>
        <dbReference type="ChEBI" id="CHEBI:15377"/>
        <dbReference type="ChEBI" id="CHEBI:15378"/>
        <dbReference type="ChEBI" id="CHEBI:37565"/>
        <dbReference type="ChEBI" id="CHEBI:43474"/>
        <dbReference type="ChEBI" id="CHEBI:58189"/>
    </reaction>
</comment>
<comment type="biophysicochemical properties">
    <kinetics>
        <KM evidence="14">99 uM for GTP</KM>
        <text evidence="14">kcat is 28 min(-1) with GTP as substrate.</text>
    </kinetics>
</comment>
<comment type="subunit">
    <text evidence="6 8 12 13 14 15 16 20">Forms homodimer and may homooligomerize and heterooligomerize to form the phragmoplastin complex (PubMed:20171176, PubMed:20231465). Interacts with AGD3/VAN3. May interact with CALS1. Binds to AHK2. Binds to SH3P2 (PubMed:28584166). Forms a complex made of SH3P2 and DRP1A and triggers its accumulation at the cell plate (PubMed:28584166). Interacts with DRP2B at the plasma membrane and in forming clathrin-coated vesicles (CCV) (PubMed:20231465). Binds to PHIP1 (PubMed:18621982).</text>
</comment>
<comment type="interaction">
    <interactant intactId="EBI-994234">
        <id>P42697</id>
    </interactant>
    <interactant intactId="EBI-994222">
        <id>Q5W7F2</id>
        <label>AGD3</label>
    </interactant>
    <organismsDiffer>false</organismsDiffer>
    <experiments>4</experiments>
</comment>
<comment type="interaction">
    <interactant intactId="EBI-994234">
        <id>P42697</id>
    </interactant>
    <interactant intactId="EBI-1100634">
        <id>Q9C5U2</id>
        <label>AHK2</label>
    </interactant>
    <organismsDiffer>false</organismsDiffer>
    <experiments>3</experiments>
</comment>
<comment type="interaction">
    <interactant intactId="EBI-994234">
        <id>P42697</id>
    </interactant>
    <interactant intactId="EBI-2355848">
        <id>Q9LQ55</id>
        <label>DRP2B</label>
    </interactant>
    <organismsDiffer>false</organismsDiffer>
    <experiments>4</experiments>
</comment>
<comment type="subcellular location">
    <subcellularLocation>
        <location evidence="4 11">Cytoplasm</location>
    </subcellularLocation>
    <subcellularLocation>
        <location evidence="6 8 10 11 20">Cytoplasm</location>
        <location evidence="6 8 10 11 20">Cytoskeleton</location>
    </subcellularLocation>
    <subcellularLocation>
        <location evidence="4 6 11 17 20">Cytoplasm</location>
        <location evidence="4 6 11 17 20">Cytoskeleton</location>
        <location evidence="4 6 11 17 20">Phragmoplast</location>
    </subcellularLocation>
    <subcellularLocation>
        <location evidence="10">Cytoplasm</location>
        <location evidence="10">Cell cortex</location>
    </subcellularLocation>
    <subcellularLocation>
        <location evidence="10 15">Cytoplasmic vesicle</location>
        <location evidence="10 15">Clathrin-coated vesicle</location>
    </subcellularLocation>
    <subcellularLocation>
        <location evidence="15 18">Cell membrane</location>
    </subcellularLocation>
    <text evidence="6 10 11 17 18 19 20">Microtubule-associated and localized in the forming cell plate, at the vicinity of sterols, during cytokinesis, especially at the leading edges (PubMed:14750520, PubMed:18612642, PubMed:25234576, PubMed:28584166). Accumulates in a sterol-enriched, polar membrane domain during root hair initiation (PubMed:27251533). Forms discreet dynamic foci in the epidermal cell cortex, which colocalize with part of the clathrin endocytic machinery (PubMed:18344418). Co-localizes with BOR1 in the cell plate and the plasma membrane (PubMed:27449211).</text>
</comment>
<comment type="alternative products">
    <event type="alternative splicing"/>
    <isoform>
        <id>P42697-1</id>
        <name>1</name>
        <sequence type="displayed"/>
    </isoform>
    <isoform>
        <id>P42697-2</id>
        <name>2</name>
        <sequence type="described" ref="VSP_009187"/>
    </isoform>
</comment>
<comment type="tissue specificity">
    <text evidence="5 7 21 22">Ubiquitous. Expressed in leaves (at protein level).</text>
</comment>
<comment type="disruption phenotype">
    <text evidence="8 9 10 18">Vascular discontinuity (PubMed:15923323, PubMed:18344418). Short and swollen roots and hypocotyls due to cellulose-deficient walls associated with increased levels of arabinose, xylose, and galactose in non-cellulosic polysaccharides (PubMed:18256049). Infertility due to the inability of stigmatic papillae to undergo rapid polar expansion prior to fertilization (PubMed:18344418). The alteration of cell wall formation correlates with abnormal phragmoplasts and division plates in dividing cells, as well as reduced cell elongation and disturbed endocytosis (PubMed:18256049). Hypersensitivity to trafficking inhibitors (e.g. brefeldin A, monensin A and latrunculin B) (PubMed:18256049). Both basal and apical shift of ARAC3/ROP6 and ARAC4/ROP2 positioning and broad lateral localization of D6PK in root hair-forming cells leading to basal and apical shift of root hair positions (PubMed:27251533).</text>
</comment>
<comment type="similarity">
    <text evidence="2">Belongs to the TRAFAC class dynamin-like GTPase superfamily. Dynamin/Fzo/YdjA family.</text>
</comment>
<comment type="sequence caution" evidence="36">
    <conflict type="frameshift">
        <sequence resource="EMBL-CDS" id="AAB63528"/>
    </conflict>
</comment>
<reference key="1">
    <citation type="journal article" date="1995" name="Plant Mol. Biol.">
        <title>Isolation of a cDNA encoding a novel GTP-binding protein of Arabidopsis thaliana.</title>
        <authorList>
            <person name="Dombrowski J.E."/>
            <person name="Raikhel N.V."/>
        </authorList>
    </citation>
    <scope>NUCLEOTIDE SEQUENCE [MRNA] (ISOFORM 1)</scope>
    <scope>TISSUE SPECIFICITY</scope>
    <source>
        <strain>cv. Columbia</strain>
        <tissue>Leaf</tissue>
    </source>
</reference>
<reference key="2">
    <citation type="journal article" date="1997" name="Plant Physiol.">
        <title>A dynamin-like protein, ADL1, is present in membranes as a high-molecular-mass complex in Arabidopsis thaliana.</title>
        <authorList>
            <person name="Park J.M."/>
            <person name="Kang S.G."/>
            <person name="Pih K.T."/>
            <person name="Jang H.J."/>
            <person name="Piao H.L."/>
            <person name="Yoon H.W."/>
            <person name="Cho M.J."/>
            <person name="Hwang I."/>
        </authorList>
    </citation>
    <scope>NUCLEOTIDE SEQUENCE [MRNA] (ISOFORM 1)</scope>
    <scope>TISSUE SPECIFICITY</scope>
    <source>
        <tissue>Leaf</tissue>
    </source>
</reference>
<reference key="3">
    <citation type="journal article" date="1999" name="DNA Res.">
        <title>Structural analysis of Arabidopsis thaliana chromosome 5. IX. Sequence features of the regions of 1,011,550 bp covered by seventeen P1 and TAC clones.</title>
        <authorList>
            <person name="Kaneko T."/>
            <person name="Katoh T."/>
            <person name="Sato S."/>
            <person name="Nakamura Y."/>
            <person name="Asamizu E."/>
            <person name="Kotani H."/>
            <person name="Miyajima N."/>
            <person name="Tabata S."/>
        </authorList>
    </citation>
    <scope>NUCLEOTIDE SEQUENCE [LARGE SCALE GENOMIC DNA]</scope>
    <source>
        <strain>cv. Columbia</strain>
    </source>
</reference>
<reference key="4">
    <citation type="journal article" date="2017" name="Plant J.">
        <title>Araport11: a complete reannotation of the Arabidopsis thaliana reference genome.</title>
        <authorList>
            <person name="Cheng C.Y."/>
            <person name="Krishnakumar V."/>
            <person name="Chan A.P."/>
            <person name="Thibaud-Nissen F."/>
            <person name="Schobel S."/>
            <person name="Town C.D."/>
        </authorList>
    </citation>
    <scope>GENOME REANNOTATION</scope>
    <source>
        <strain>cv. Columbia</strain>
    </source>
</reference>
<reference key="5">
    <citation type="journal article" date="2003" name="Science">
        <title>Empirical analysis of transcriptional activity in the Arabidopsis genome.</title>
        <authorList>
            <person name="Yamada K."/>
            <person name="Lim J."/>
            <person name="Dale J.M."/>
            <person name="Chen H."/>
            <person name="Shinn P."/>
            <person name="Palm C.J."/>
            <person name="Southwick A.M."/>
            <person name="Wu H.C."/>
            <person name="Kim C.J."/>
            <person name="Nguyen M."/>
            <person name="Pham P.K."/>
            <person name="Cheuk R.F."/>
            <person name="Karlin-Newmann G."/>
            <person name="Liu S.X."/>
            <person name="Lam B."/>
            <person name="Sakano H."/>
            <person name="Wu T."/>
            <person name="Yu G."/>
            <person name="Miranda M."/>
            <person name="Quach H.L."/>
            <person name="Tripp M."/>
            <person name="Chang C.H."/>
            <person name="Lee J.M."/>
            <person name="Toriumi M.J."/>
            <person name="Chan M.M."/>
            <person name="Tang C.C."/>
            <person name="Onodera C.S."/>
            <person name="Deng J.M."/>
            <person name="Akiyama K."/>
            <person name="Ansari Y."/>
            <person name="Arakawa T."/>
            <person name="Banh J."/>
            <person name="Banno F."/>
            <person name="Bowser L."/>
            <person name="Brooks S.Y."/>
            <person name="Carninci P."/>
            <person name="Chao Q."/>
            <person name="Choy N."/>
            <person name="Enju A."/>
            <person name="Goldsmith A.D."/>
            <person name="Gurjal M."/>
            <person name="Hansen N.F."/>
            <person name="Hayashizaki Y."/>
            <person name="Johnson-Hopson C."/>
            <person name="Hsuan V.W."/>
            <person name="Iida K."/>
            <person name="Karnes M."/>
            <person name="Khan S."/>
            <person name="Koesema E."/>
            <person name="Ishida J."/>
            <person name="Jiang P.X."/>
            <person name="Jones T."/>
            <person name="Kawai J."/>
            <person name="Kamiya A."/>
            <person name="Meyers C."/>
            <person name="Nakajima M."/>
            <person name="Narusaka M."/>
            <person name="Seki M."/>
            <person name="Sakurai T."/>
            <person name="Satou M."/>
            <person name="Tamse R."/>
            <person name="Vaysberg M."/>
            <person name="Wallender E.K."/>
            <person name="Wong C."/>
            <person name="Yamamura Y."/>
            <person name="Yuan S."/>
            <person name="Shinozaki K."/>
            <person name="Davis R.W."/>
            <person name="Theologis A."/>
            <person name="Ecker J.R."/>
        </authorList>
    </citation>
    <scope>NUCLEOTIDE SEQUENCE [LARGE SCALE MRNA] (ISOFORM 1)</scope>
    <source>
        <strain>cv. Columbia</strain>
    </source>
</reference>
<reference key="6">
    <citation type="submission" date="2006-06" db="EMBL/GenBank/DDBJ databases">
        <title>Arabidopsis ORF clones.</title>
        <authorList>
            <person name="Shinn P."/>
            <person name="Chen H."/>
            <person name="Kim C.J."/>
            <person name="Quinitio C."/>
            <person name="Ecker J.R."/>
        </authorList>
    </citation>
    <scope>NUCLEOTIDE SEQUENCE [LARGE SCALE MRNA] (ISOFORM 2)</scope>
    <source>
        <strain>cv. Columbia</strain>
    </source>
</reference>
<reference key="7">
    <citation type="submission" date="2002-03" db="EMBL/GenBank/DDBJ databases">
        <title>Full-length cDNA from Arabidopsis thaliana.</title>
        <authorList>
            <person name="Brover V.V."/>
            <person name="Troukhan M.E."/>
            <person name="Alexandrov N.A."/>
            <person name="Lu Y.-P."/>
            <person name="Flavell R.B."/>
            <person name="Feldmann K.A."/>
        </authorList>
    </citation>
    <scope>NUCLEOTIDE SEQUENCE [LARGE SCALE MRNA] (ISOFORM 2)</scope>
</reference>
<reference key="8">
    <citation type="submission" date="2006-07" db="EMBL/GenBank/DDBJ databases">
        <title>Large-scale analysis of RIKEN Arabidopsis full-length (RAFL) cDNAs.</title>
        <authorList>
            <person name="Totoki Y."/>
            <person name="Seki M."/>
            <person name="Ishida J."/>
            <person name="Nakajima M."/>
            <person name="Enju A."/>
            <person name="Kamiya A."/>
            <person name="Narusaka M."/>
            <person name="Shin-i T."/>
            <person name="Nakagawa M."/>
            <person name="Sakamoto N."/>
            <person name="Oishi K."/>
            <person name="Kohara Y."/>
            <person name="Kobayashi M."/>
            <person name="Toyoda A."/>
            <person name="Sakaki Y."/>
            <person name="Sakurai T."/>
            <person name="Iida K."/>
            <person name="Akiyama K."/>
            <person name="Satou M."/>
            <person name="Toyoda T."/>
            <person name="Konagaya A."/>
            <person name="Carninci P."/>
            <person name="Kawai J."/>
            <person name="Hayashizaki Y."/>
            <person name="Shinozaki K."/>
        </authorList>
    </citation>
    <scope>NUCLEOTIDE SEQUENCE [LARGE SCALE MRNA] OF 154-610 (ISOFORM 1)</scope>
    <source>
        <strain>cv. Columbia</strain>
    </source>
</reference>
<reference key="9">
    <citation type="journal article" date="2001" name="Plant Physiol.">
        <title>The Arabidopsis cell plate-associated dynamin-like protein, ADL1Ap, is required for multiple stages of plant growth and development.</title>
        <authorList>
            <person name="Kang B.-H."/>
            <person name="Busse J.S."/>
            <person name="Dickey C."/>
            <person name="Rancour D.M."/>
            <person name="Bednarek S.Y."/>
        </authorList>
    </citation>
    <scope>FUNCTION</scope>
</reference>
<reference key="10">
    <citation type="journal article" date="2003" name="Plant Cell">
        <title>Members of the Arabidopsis dynamin-like gene family, ADL1, are essential for plant cytokinesis and polarized cell growth.</title>
        <authorList>
            <person name="Kang B.-H."/>
            <person name="Busse J.S."/>
            <person name="Bednarek S.Y."/>
        </authorList>
    </citation>
    <scope>FUNCTION</scope>
    <scope>SUBCELLULAR LOCATION</scope>
</reference>
<reference key="11">
    <citation type="journal article" date="2003" name="Plant J.">
        <title>The dynamin-like protein ADL1C is essential for plasma membrane maintenance during pollen maturation.</title>
        <authorList>
            <person name="Kang B.-H."/>
            <person name="Rancour D.M."/>
            <person name="Bednarek S.Y."/>
        </authorList>
    </citation>
    <scope>TISSUE SPECIFICITY</scope>
</reference>
<reference key="12">
    <citation type="journal article" date="2003" name="Plant Mol. Biol.">
        <title>A unified nomenclature for Arabidopsis dynamin-related large GTPases based on homology and possible functions.</title>
        <authorList>
            <person name="Hong Z."/>
            <person name="Bednarek S.Y."/>
            <person name="Blumwald E."/>
            <person name="Hwang I."/>
            <person name="Jurgens G."/>
            <person name="Menzel D."/>
            <person name="Osteryoung K.W."/>
            <person name="Raikhel N.V."/>
            <person name="Shinozaki K."/>
            <person name="Tsutsumi N."/>
            <person name="Verma D.P.S."/>
        </authorList>
    </citation>
    <scope>GENE FAMILY</scope>
    <scope>NOMENCLATURE</scope>
</reference>
<reference key="13">
    <citation type="journal article" date="2003" name="Plant Mol. Biol.">
        <title>Phragmoplastin dynamics: multiple forms, microtubule association and their roles in cell plate formation in plants.</title>
        <authorList>
            <person name="Hong Z."/>
            <person name="Geisler-Lee C.J."/>
            <person name="Zhang Z."/>
            <person name="Verma D.P.S."/>
        </authorList>
    </citation>
    <scope>FUNCTION</scope>
    <scope>SUBUNIT</scope>
    <scope>SUBCELLULAR LOCATION</scope>
</reference>
<reference key="14">
    <citation type="journal article" date="2005" name="Plant Physiol.">
        <title>DRP1A is responsible for vascular continuity synergistically working with VAN3 in Arabidopsis.</title>
        <authorList>
            <person name="Sawa S."/>
            <person name="Koizumi K."/>
            <person name="Naramoto S."/>
            <person name="Demura T."/>
            <person name="Ueda T."/>
            <person name="Nakano A."/>
            <person name="Fukuda H."/>
        </authorList>
    </citation>
    <scope>FUNCTION</scope>
    <scope>SUBCELLULAR LOCATION</scope>
    <scope>INTERACTION WITH AGD3</scope>
    <scope>DISRUPTION PHENOTYPE</scope>
</reference>
<reference key="15">
    <citation type="journal article" date="2005" name="Proteomics">
        <title>Proteome analysis of Arabidopsis thaliana by two-dimensional gel electrophoresis and matrix-assisted laser desorption/ionisation-time of flight mass spectrometry.</title>
        <authorList>
            <person name="Giavalisco P."/>
            <person name="Nordhoff E."/>
            <person name="Kreitler T."/>
            <person name="Kloeppel K.-D."/>
            <person name="Lehrach H."/>
            <person name="Klose J."/>
            <person name="Gobom J."/>
        </authorList>
    </citation>
    <scope>TISSUE SPECIFICITY</scope>
</reference>
<reference key="16">
    <citation type="journal article" date="2008" name="J. Exp. Bot.">
        <title>Arabidopsis dynamin-like protein DRP1A: a null mutant with widespread defects in endocytosis, cellulose synthesis, cytokinesis, and cell expansion.</title>
        <authorList>
            <person name="Collings D.A."/>
            <person name="Gebbie L.K."/>
            <person name="Howles P.A."/>
            <person name="Hurley U.A."/>
            <person name="Birch R.J."/>
            <person name="Cork A.H."/>
            <person name="Hocart C.H."/>
            <person name="Arioli T."/>
            <person name="Williamson R.E."/>
        </authorList>
    </citation>
    <scope>FUNCTION</scope>
    <scope>DISRUPTION PHENOTYPE</scope>
    <source>
        <strain>cv. Columbia</strain>
    </source>
</reference>
<reference key="17">
    <citation type="journal article" date="2008" name="J. Proteome Res.">
        <title>Toward an interaction map of the two-component signaling pathway of Arabidopsis thaliana.</title>
        <authorList>
            <person name="Dortay H."/>
            <person name="Gruhn N."/>
            <person name="Pfeifer A."/>
            <person name="Schwerdtner M."/>
            <person name="Schmuelling T."/>
            <person name="Heyl A."/>
        </authorList>
    </citation>
    <scope>INTERACTION WITH AHK2</scope>
</reference>
<reference key="18">
    <citation type="journal article" date="2008" name="Plant Cell Rep.">
        <title>Arabidopsis dynamin-related protein DRP2B is co-localized with DRP1A on the leading edge of the forming cell plate.</title>
        <authorList>
            <person name="Fujimoto M."/>
            <person name="Arimura S."/>
            <person name="Nakazono M."/>
            <person name="Tsutsumi N."/>
        </authorList>
    </citation>
    <scope>FUNCTION</scope>
    <scope>SUBCELLULAR LOCATION</scope>
</reference>
<reference key="19">
    <citation type="journal article" date="2008" name="Plant Physiol.">
        <title>Comparison of the dynamics and functional redundancy of the Arabidopsis dynamin-related isoforms DRP1A and DRP1C during plant development.</title>
        <authorList>
            <person name="Konopka C.A."/>
            <person name="Bednarek S.Y."/>
        </authorList>
    </citation>
    <scope>FUNCTION</scope>
    <scope>DISRUPTION PHENOTYPE</scope>
    <scope>SUBCELLULAR LOCATION</scope>
</reference>
<reference key="20">
    <citation type="journal article" date="2008" name="Plant Physiol.">
        <title>A novel RNA-binding protein associated with cell plate formation.</title>
        <authorList>
            <person name="Ma L."/>
            <person name="Xie B."/>
            <person name="Hong Z."/>
            <person name="Verma D.P.S."/>
            <person name="Zhang Z."/>
        </authorList>
    </citation>
    <scope>INTERACTION WITH PHIP1</scope>
</reference>
<reference key="21">
    <citation type="journal article" date="2010" name="Biochem. Biophys. Res. Commun.">
        <title>Arabidopsis dynamin-related protein 1A polymers bind, but do not tubulate, liposomes.</title>
        <authorList>
            <person name="Backues S.K."/>
            <person name="Bednarek S.Y."/>
        </authorList>
    </citation>
    <scope>FUNCTION</scope>
    <scope>SUBUNIT</scope>
    <scope>CATALYTIC ACTIVITY</scope>
    <scope>BIOPHYSICOCHEMICAL PROPERTIES</scope>
</reference>
<reference key="22">
    <citation type="journal article" date="2010" name="Proc. Natl. Acad. Sci. U.S.A.">
        <title>Arabidopsis dynamin-related proteins DRP2B and DRP1A participate together in clathrin-coated vesicle formation during endocytosis.</title>
        <authorList>
            <person name="Fujimoto M."/>
            <person name="Arimura S."/>
            <person name="Ueda T."/>
            <person name="Takanashi H."/>
            <person name="Hayashi Y."/>
            <person name="Nakano A."/>
            <person name="Tsutsumi N."/>
        </authorList>
    </citation>
    <scope>FUNCTION</scope>
    <scope>SUBCELLULAR LOCATION</scope>
    <scope>INTERACTION WITH DRP2B</scope>
    <scope>HOMODIMER</scope>
    <source>
        <strain>cv. Columbia</strain>
    </source>
</reference>
<reference key="23">
    <citation type="journal article" date="2012" name="Mol. Cell. Proteomics">
        <title>Comparative large-scale characterisation of plant vs. mammal proteins reveals similar and idiosyncratic N-alpha acetylation features.</title>
        <authorList>
            <person name="Bienvenut W.V."/>
            <person name="Sumpton D."/>
            <person name="Martinez A."/>
            <person name="Lilla S."/>
            <person name="Espagne C."/>
            <person name="Meinnel T."/>
            <person name="Giglione C."/>
        </authorList>
    </citation>
    <scope>ACETYLATION [LARGE SCALE ANALYSIS] AT MET-1</scope>
    <scope>IDENTIFICATION BY MASS SPECTROMETRY [LARGE SCALE ANALYSIS]</scope>
</reference>
<reference key="24">
    <citation type="journal article" date="2014" name="Plant J.">
        <title>High lipid order of Arabidopsis cell-plate membranes mediated by sterol and DYNAMIN-RELATED PROTEIN1A function.</title>
        <authorList>
            <person name="Frescatada-Rosa M."/>
            <person name="Stanislas T."/>
            <person name="Backues S.K."/>
            <person name="Reichardt I."/>
            <person name="Men S."/>
            <person name="Boutte Y."/>
            <person name="Juergens G."/>
            <person name="Moritz T."/>
            <person name="Bednarek S.Y."/>
            <person name="Grebe M."/>
        </authorList>
    </citation>
    <scope>FUNCTION</scope>
    <scope>SUBCELLULAR LOCATION</scope>
    <source>
        <strain>cv. Columbia</strain>
        <strain>cv. Landsberg erecta</strain>
    </source>
</reference>
<reference key="25">
    <citation type="journal article" date="2015" name="Nat. Plants">
        <title>Arabidopsis D6PK is a lipid domain-dependent mediator of root epidermal planar polarity.</title>
        <authorList>
            <person name="Stanislas T."/>
            <person name="Hueser A."/>
            <person name="Barbosa I.C.R."/>
            <person name="Kiefer C.S."/>
            <person name="Brackmann K."/>
            <person name="Pietra S."/>
            <person name="Gustavsson A."/>
            <person name="Zourelidou M."/>
            <person name="Schwechheimer C."/>
            <person name="Grebe M."/>
        </authorList>
    </citation>
    <scope>FUNCTION</scope>
    <scope>DISRUPTION PHENOTYPE</scope>
    <scope>SUBCELLULAR LOCATION</scope>
    <source>
        <strain>cv. Columbia</strain>
    </source>
</reference>
<reference key="26">
    <citation type="journal article" date="2016" name="Plant Cell Physiol.">
        <title>DRP1-dependent endocytosis is essential for polar Localization and boron-induced degradation of the borate transporter BOR1 in Arabidopsis thaliana.</title>
        <authorList>
            <person name="Yoshinari A."/>
            <person name="Fujimoto M."/>
            <person name="Ueda T."/>
            <person name="Inada N."/>
            <person name="Naito S."/>
            <person name="Takano J."/>
        </authorList>
    </citation>
    <scope>FUNCTION</scope>
    <scope>SUBCELLULAR LOCATION</scope>
    <scope>MUTAGENESIS OF LYS-47</scope>
    <source>
        <strain>cv. Columbia</strain>
    </source>
</reference>
<reference key="27">
    <citation type="journal article" date="2017" name="Plant Cell">
        <title>SH3 domain-containing protein 2 plays a crucial role at the step of membrane tubulation during cell plate formation.</title>
        <authorList>
            <person name="Ahn G."/>
            <person name="Kim H."/>
            <person name="Kim D.H."/>
            <person name="Hanh H."/>
            <person name="Yoon Y."/>
            <person name="Singaram I."/>
            <person name="Wijesinghe K.J."/>
            <person name="Johnson K.A."/>
            <person name="Zhuang X."/>
            <person name="Liang Z."/>
            <person name="Stahelin R.V."/>
            <person name="Jiang L."/>
            <person name="Cho W."/>
            <person name="Kang B.-H."/>
            <person name="Hwang I."/>
        </authorList>
    </citation>
    <scope>FUNCTION</scope>
    <scope>INTERACTION WITH SH3P2</scope>
    <source>
        <strain>cv. Columbia</strain>
        <strain>cv. Wassilewskija-2</strain>
    </source>
</reference>
<reference key="28">
    <citation type="journal article" date="2011" name="J. Mol. Cell Biol.">
        <title>Structural basis for mechanochemical role of Arabidopsis thaliana dynamin-related protein in membrane fission.</title>
        <authorList>
            <person name="Yan L."/>
            <person name="Ma Y."/>
            <person name="Sun Y."/>
            <person name="Gao J."/>
            <person name="Chen X."/>
            <person name="Liu J."/>
            <person name="Wang C."/>
            <person name="Rao Z."/>
            <person name="Lou Z."/>
        </authorList>
    </citation>
    <scope>X-RAY CRYSTALLOGRAPHY (2.40 ANGSTROMS) OF 1-325 AND 579-606 IN COMPLEX WITH GTP</scope>
    <scope>FUNCTION</scope>
    <scope>SUBUNIT</scope>
</reference>